<organism>
    <name type="scientific">Histophilus somni (strain 2336)</name>
    <name type="common">Haemophilus somnus</name>
    <dbReference type="NCBI Taxonomy" id="228400"/>
    <lineage>
        <taxon>Bacteria</taxon>
        <taxon>Pseudomonadati</taxon>
        <taxon>Pseudomonadota</taxon>
        <taxon>Gammaproteobacteria</taxon>
        <taxon>Pasteurellales</taxon>
        <taxon>Pasteurellaceae</taxon>
        <taxon>Histophilus</taxon>
    </lineage>
</organism>
<name>TRPD_HISS2</name>
<reference key="1">
    <citation type="submission" date="2008-02" db="EMBL/GenBank/DDBJ databases">
        <title>Complete sequence of Haemophilus somnus 2336.</title>
        <authorList>
            <consortium name="US DOE Joint Genome Institute"/>
            <person name="Siddaramappa S."/>
            <person name="Duncan A.J."/>
            <person name="Challacombe J.F."/>
            <person name="Rainey D."/>
            <person name="Gillaspy A.F."/>
            <person name="Carson M."/>
            <person name="Gipson J."/>
            <person name="Gipson M."/>
            <person name="Bruce D."/>
            <person name="Detter J.C."/>
            <person name="Han C.S."/>
            <person name="Land M."/>
            <person name="Tapia R."/>
            <person name="Thompson L.S."/>
            <person name="Orvis J."/>
            <person name="Zaitshik J."/>
            <person name="Barnes G."/>
            <person name="Brettin T.S."/>
            <person name="Dyer D.W."/>
            <person name="Inzana T.J."/>
        </authorList>
    </citation>
    <scope>NUCLEOTIDE SEQUENCE [LARGE SCALE GENOMIC DNA]</scope>
    <source>
        <strain>2336</strain>
    </source>
</reference>
<accession>B0UU36</accession>
<gene>
    <name evidence="1" type="primary">trpD</name>
    <name type="ordered locus">HSM_1313</name>
</gene>
<proteinExistence type="inferred from homology"/>
<comment type="function">
    <text evidence="1">Catalyzes the transfer of the phosphoribosyl group of 5-phosphorylribose-1-pyrophosphate (PRPP) to anthranilate to yield N-(5'-phosphoribosyl)-anthranilate (PRA).</text>
</comment>
<comment type="catalytic activity">
    <reaction evidence="1">
        <text>N-(5-phospho-beta-D-ribosyl)anthranilate + diphosphate = 5-phospho-alpha-D-ribose 1-diphosphate + anthranilate</text>
        <dbReference type="Rhea" id="RHEA:11768"/>
        <dbReference type="ChEBI" id="CHEBI:16567"/>
        <dbReference type="ChEBI" id="CHEBI:18277"/>
        <dbReference type="ChEBI" id="CHEBI:33019"/>
        <dbReference type="ChEBI" id="CHEBI:58017"/>
        <dbReference type="EC" id="2.4.2.18"/>
    </reaction>
</comment>
<comment type="cofactor">
    <cofactor evidence="1">
        <name>Mg(2+)</name>
        <dbReference type="ChEBI" id="CHEBI:18420"/>
    </cofactor>
    <text evidence="1">Binds 2 magnesium ions per monomer.</text>
</comment>
<comment type="pathway">
    <text evidence="1">Amino-acid biosynthesis; L-tryptophan biosynthesis; L-tryptophan from chorismate: step 2/5.</text>
</comment>
<comment type="subunit">
    <text evidence="1">Homodimer.</text>
</comment>
<comment type="similarity">
    <text evidence="1">Belongs to the anthranilate phosphoribosyltransferase family.</text>
</comment>
<evidence type="ECO:0000255" key="1">
    <source>
        <dbReference type="HAMAP-Rule" id="MF_00211"/>
    </source>
</evidence>
<protein>
    <recommendedName>
        <fullName evidence="1">Anthranilate phosphoribosyltransferase</fullName>
        <ecNumber evidence="1">2.4.2.18</ecNumber>
    </recommendedName>
</protein>
<sequence length="334" mass="36508">MQTEQLISQLFDGQHLNQEQIQQLFHYIIQGQLSNEQLAGVLIALKFRGEQTDEISGAVKAIIANAKPFPFIDYPFADIVGTGGDNANTINISTTAAIVAATLGYKVVKHGNRSVSSKSGASDVLNALGIKIDLSAEKSKQALDNLNLCFLWAQQYHLGFKHVAPVRQILKTRTIFNILGPLCNPARPKHQLLGVYTPHLLKIYAESALRLGHQHSIVIHGSGLDEVAIHGKTDVAEICHGKIEYYSLTPHDFGFTPKPLETLRGGTAEENAKILTALLQGKGKDEHNQAVAMNTALLMKLFGNDDIKANAEKALNIMANGKAFETLNQLKLYQ</sequence>
<keyword id="KW-0028">Amino-acid biosynthesis</keyword>
<keyword id="KW-0057">Aromatic amino acid biosynthesis</keyword>
<keyword id="KW-0328">Glycosyltransferase</keyword>
<keyword id="KW-0460">Magnesium</keyword>
<keyword id="KW-0479">Metal-binding</keyword>
<keyword id="KW-0808">Transferase</keyword>
<keyword id="KW-0822">Tryptophan biosynthesis</keyword>
<feature type="chain" id="PRO_1000078016" description="Anthranilate phosphoribosyltransferase">
    <location>
        <begin position="1"/>
        <end position="334"/>
    </location>
</feature>
<feature type="binding site" evidence="1">
    <location>
        <position position="81"/>
    </location>
    <ligand>
        <name>5-phospho-alpha-D-ribose 1-diphosphate</name>
        <dbReference type="ChEBI" id="CHEBI:58017"/>
    </ligand>
</feature>
<feature type="binding site" evidence="1">
    <location>
        <position position="81"/>
    </location>
    <ligand>
        <name>anthranilate</name>
        <dbReference type="ChEBI" id="CHEBI:16567"/>
        <label>1</label>
    </ligand>
</feature>
<feature type="binding site" evidence="1">
    <location>
        <begin position="84"/>
        <end position="85"/>
    </location>
    <ligand>
        <name>5-phospho-alpha-D-ribose 1-diphosphate</name>
        <dbReference type="ChEBI" id="CHEBI:58017"/>
    </ligand>
</feature>
<feature type="binding site" evidence="1">
    <location>
        <position position="89"/>
    </location>
    <ligand>
        <name>5-phospho-alpha-D-ribose 1-diphosphate</name>
        <dbReference type="ChEBI" id="CHEBI:58017"/>
    </ligand>
</feature>
<feature type="binding site" evidence="1">
    <location>
        <begin position="91"/>
        <end position="94"/>
    </location>
    <ligand>
        <name>5-phospho-alpha-D-ribose 1-diphosphate</name>
        <dbReference type="ChEBI" id="CHEBI:58017"/>
    </ligand>
</feature>
<feature type="binding site" evidence="1">
    <location>
        <position position="93"/>
    </location>
    <ligand>
        <name>Mg(2+)</name>
        <dbReference type="ChEBI" id="CHEBI:18420"/>
        <label>1</label>
    </ligand>
</feature>
<feature type="binding site" evidence="1">
    <location>
        <begin position="109"/>
        <end position="117"/>
    </location>
    <ligand>
        <name>5-phospho-alpha-D-ribose 1-diphosphate</name>
        <dbReference type="ChEBI" id="CHEBI:58017"/>
    </ligand>
</feature>
<feature type="binding site" evidence="1">
    <location>
        <position position="112"/>
    </location>
    <ligand>
        <name>anthranilate</name>
        <dbReference type="ChEBI" id="CHEBI:16567"/>
        <label>1</label>
    </ligand>
</feature>
<feature type="binding site" evidence="1">
    <location>
        <position position="121"/>
    </location>
    <ligand>
        <name>5-phospho-alpha-D-ribose 1-diphosphate</name>
        <dbReference type="ChEBI" id="CHEBI:58017"/>
    </ligand>
</feature>
<feature type="binding site" evidence="1">
    <location>
        <position position="167"/>
    </location>
    <ligand>
        <name>anthranilate</name>
        <dbReference type="ChEBI" id="CHEBI:16567"/>
        <label>2</label>
    </ligand>
</feature>
<feature type="binding site" evidence="1">
    <location>
        <position position="225"/>
    </location>
    <ligand>
        <name>Mg(2+)</name>
        <dbReference type="ChEBI" id="CHEBI:18420"/>
        <label>2</label>
    </ligand>
</feature>
<feature type="binding site" evidence="1">
    <location>
        <position position="226"/>
    </location>
    <ligand>
        <name>Mg(2+)</name>
        <dbReference type="ChEBI" id="CHEBI:18420"/>
        <label>1</label>
    </ligand>
</feature>
<feature type="binding site" evidence="1">
    <location>
        <position position="226"/>
    </location>
    <ligand>
        <name>Mg(2+)</name>
        <dbReference type="ChEBI" id="CHEBI:18420"/>
        <label>2</label>
    </ligand>
</feature>
<dbReference type="EC" id="2.4.2.18" evidence="1"/>
<dbReference type="EMBL" id="CP000947">
    <property type="protein sequence ID" value="ACA31047.1"/>
    <property type="molecule type" value="Genomic_DNA"/>
</dbReference>
<dbReference type="RefSeq" id="WP_012340471.1">
    <property type="nucleotide sequence ID" value="NC_010519.1"/>
</dbReference>
<dbReference type="SMR" id="B0UU36"/>
<dbReference type="STRING" id="228400.HSM_1313"/>
<dbReference type="GeneID" id="31487616"/>
<dbReference type="KEGG" id="hsm:HSM_1313"/>
<dbReference type="HOGENOM" id="CLU_034315_2_1_6"/>
<dbReference type="UniPathway" id="UPA00035">
    <property type="reaction ID" value="UER00041"/>
</dbReference>
<dbReference type="GO" id="GO:0005829">
    <property type="term" value="C:cytosol"/>
    <property type="evidence" value="ECO:0007669"/>
    <property type="project" value="TreeGrafter"/>
</dbReference>
<dbReference type="GO" id="GO:0004048">
    <property type="term" value="F:anthranilate phosphoribosyltransferase activity"/>
    <property type="evidence" value="ECO:0007669"/>
    <property type="project" value="UniProtKB-UniRule"/>
</dbReference>
<dbReference type="GO" id="GO:0000287">
    <property type="term" value="F:magnesium ion binding"/>
    <property type="evidence" value="ECO:0007669"/>
    <property type="project" value="UniProtKB-UniRule"/>
</dbReference>
<dbReference type="GO" id="GO:0000162">
    <property type="term" value="P:L-tryptophan biosynthetic process"/>
    <property type="evidence" value="ECO:0007669"/>
    <property type="project" value="UniProtKB-UniRule"/>
</dbReference>
<dbReference type="FunFam" id="3.40.1030.10:FF:000002">
    <property type="entry name" value="Anthranilate phosphoribosyltransferase"/>
    <property type="match status" value="1"/>
</dbReference>
<dbReference type="Gene3D" id="3.40.1030.10">
    <property type="entry name" value="Nucleoside phosphorylase/phosphoribosyltransferase catalytic domain"/>
    <property type="match status" value="1"/>
</dbReference>
<dbReference type="Gene3D" id="1.20.970.10">
    <property type="entry name" value="Transferase, Pyrimidine Nucleoside Phosphorylase, Chain C"/>
    <property type="match status" value="1"/>
</dbReference>
<dbReference type="HAMAP" id="MF_00211">
    <property type="entry name" value="TrpD"/>
    <property type="match status" value="1"/>
</dbReference>
<dbReference type="InterPro" id="IPR005940">
    <property type="entry name" value="Anthranilate_Pribosyl_Tfrase"/>
</dbReference>
<dbReference type="InterPro" id="IPR000312">
    <property type="entry name" value="Glycosyl_Trfase_fam3"/>
</dbReference>
<dbReference type="InterPro" id="IPR017459">
    <property type="entry name" value="Glycosyl_Trfase_fam3_N_dom"/>
</dbReference>
<dbReference type="InterPro" id="IPR036320">
    <property type="entry name" value="Glycosyl_Trfase_fam3_N_dom_sf"/>
</dbReference>
<dbReference type="InterPro" id="IPR035902">
    <property type="entry name" value="Nuc_phospho_transferase"/>
</dbReference>
<dbReference type="NCBIfam" id="TIGR01245">
    <property type="entry name" value="trpD"/>
    <property type="match status" value="1"/>
</dbReference>
<dbReference type="PANTHER" id="PTHR43285">
    <property type="entry name" value="ANTHRANILATE PHOSPHORIBOSYLTRANSFERASE"/>
    <property type="match status" value="1"/>
</dbReference>
<dbReference type="PANTHER" id="PTHR43285:SF2">
    <property type="entry name" value="ANTHRANILATE PHOSPHORIBOSYLTRANSFERASE"/>
    <property type="match status" value="1"/>
</dbReference>
<dbReference type="Pfam" id="PF02885">
    <property type="entry name" value="Glycos_trans_3N"/>
    <property type="match status" value="1"/>
</dbReference>
<dbReference type="Pfam" id="PF00591">
    <property type="entry name" value="Glycos_transf_3"/>
    <property type="match status" value="1"/>
</dbReference>
<dbReference type="SUPFAM" id="SSF52418">
    <property type="entry name" value="Nucleoside phosphorylase/phosphoribosyltransferase catalytic domain"/>
    <property type="match status" value="1"/>
</dbReference>
<dbReference type="SUPFAM" id="SSF47648">
    <property type="entry name" value="Nucleoside phosphorylase/phosphoribosyltransferase N-terminal domain"/>
    <property type="match status" value="1"/>
</dbReference>